<sequence>MLLTHLNEENQPKMVDIGDKETTERIALASGRISMNKEAYDAIVNHCVKKGPVLQTAIIAGIMGAKKTSELIPMCHSIMLNGVDIDILEEKETCSFKLYARVKTQAKTGVEMEALMSVSIGLLTIYDMVKAIDKSMTISGVMLEHKSGGKSGDYNAKK</sequence>
<feature type="chain" id="PRO_1000139273" description="Cyclic pyranopterin monophosphate synthase">
    <location>
        <begin position="1"/>
        <end position="158"/>
    </location>
</feature>
<feature type="active site" evidence="1">
    <location>
        <position position="127"/>
    </location>
</feature>
<feature type="binding site" evidence="1">
    <location>
        <begin position="74"/>
        <end position="76"/>
    </location>
    <ligand>
        <name>substrate</name>
    </ligand>
</feature>
<feature type="binding site" evidence="1">
    <location>
        <begin position="112"/>
        <end position="113"/>
    </location>
    <ligand>
        <name>substrate</name>
    </ligand>
</feature>
<proteinExistence type="inferred from homology"/>
<comment type="function">
    <text evidence="1">Catalyzes the conversion of (8S)-3',8-cyclo-7,8-dihydroguanosine 5'-triphosphate to cyclic pyranopterin monophosphate (cPMP).</text>
</comment>
<comment type="catalytic activity">
    <reaction evidence="1">
        <text>(8S)-3',8-cyclo-7,8-dihydroguanosine 5'-triphosphate = cyclic pyranopterin phosphate + diphosphate</text>
        <dbReference type="Rhea" id="RHEA:49580"/>
        <dbReference type="ChEBI" id="CHEBI:33019"/>
        <dbReference type="ChEBI" id="CHEBI:59648"/>
        <dbReference type="ChEBI" id="CHEBI:131766"/>
        <dbReference type="EC" id="4.6.1.17"/>
    </reaction>
</comment>
<comment type="pathway">
    <text evidence="1">Cofactor biosynthesis; molybdopterin biosynthesis.</text>
</comment>
<comment type="subunit">
    <text evidence="1">Homohexamer; trimer of dimers.</text>
</comment>
<comment type="similarity">
    <text evidence="1">Belongs to the MoaC family.</text>
</comment>
<protein>
    <recommendedName>
        <fullName evidence="1">Cyclic pyranopterin monophosphate synthase</fullName>
        <ecNumber evidence="1">4.6.1.17</ecNumber>
    </recommendedName>
    <alternativeName>
        <fullName evidence="1">Molybdenum cofactor biosynthesis protein C</fullName>
    </alternativeName>
</protein>
<keyword id="KW-0456">Lyase</keyword>
<keyword id="KW-0501">Molybdenum cofactor biosynthesis</keyword>
<evidence type="ECO:0000255" key="1">
    <source>
        <dbReference type="HAMAP-Rule" id="MF_01224"/>
    </source>
</evidence>
<gene>
    <name evidence="1" type="primary">moaC</name>
    <name type="ordered locus">HPP12_0805</name>
</gene>
<accession>B6JM29</accession>
<dbReference type="EC" id="4.6.1.17" evidence="1"/>
<dbReference type="EMBL" id="CP001217">
    <property type="protein sequence ID" value="ACJ07957.1"/>
    <property type="molecule type" value="Genomic_DNA"/>
</dbReference>
<dbReference type="SMR" id="B6JM29"/>
<dbReference type="KEGG" id="hpp:HPP12_0805"/>
<dbReference type="HOGENOM" id="CLU_074693_1_1_7"/>
<dbReference type="UniPathway" id="UPA00344"/>
<dbReference type="Proteomes" id="UP000008198">
    <property type="component" value="Chromosome"/>
</dbReference>
<dbReference type="GO" id="GO:0061799">
    <property type="term" value="F:cyclic pyranopterin monophosphate synthase activity"/>
    <property type="evidence" value="ECO:0007669"/>
    <property type="project" value="UniProtKB-UniRule"/>
</dbReference>
<dbReference type="GO" id="GO:0006777">
    <property type="term" value="P:Mo-molybdopterin cofactor biosynthetic process"/>
    <property type="evidence" value="ECO:0007669"/>
    <property type="project" value="UniProtKB-UniRule"/>
</dbReference>
<dbReference type="CDD" id="cd01420">
    <property type="entry name" value="MoaC_PE"/>
    <property type="match status" value="1"/>
</dbReference>
<dbReference type="Gene3D" id="3.30.70.640">
    <property type="entry name" value="Molybdopterin cofactor biosynthesis C (MoaC) domain"/>
    <property type="match status" value="1"/>
</dbReference>
<dbReference type="HAMAP" id="MF_01224_B">
    <property type="entry name" value="MoaC_B"/>
    <property type="match status" value="1"/>
</dbReference>
<dbReference type="InterPro" id="IPR023045">
    <property type="entry name" value="MoaC"/>
</dbReference>
<dbReference type="InterPro" id="IPR047594">
    <property type="entry name" value="MoaC_bact/euk"/>
</dbReference>
<dbReference type="InterPro" id="IPR036522">
    <property type="entry name" value="MoaC_sf"/>
</dbReference>
<dbReference type="InterPro" id="IPR050105">
    <property type="entry name" value="MoCo_biosynth_MoaA/MoaC"/>
</dbReference>
<dbReference type="InterPro" id="IPR002820">
    <property type="entry name" value="Mopterin_CF_biosynth-C_dom"/>
</dbReference>
<dbReference type="NCBIfam" id="TIGR00581">
    <property type="entry name" value="moaC"/>
    <property type="match status" value="1"/>
</dbReference>
<dbReference type="NCBIfam" id="NF006870">
    <property type="entry name" value="PRK09364.1"/>
    <property type="match status" value="1"/>
</dbReference>
<dbReference type="PANTHER" id="PTHR22960">
    <property type="entry name" value="MOLYBDOPTERIN COFACTOR SYNTHESIS PROTEIN A"/>
    <property type="match status" value="1"/>
</dbReference>
<dbReference type="Pfam" id="PF01967">
    <property type="entry name" value="MoaC"/>
    <property type="match status" value="1"/>
</dbReference>
<dbReference type="SUPFAM" id="SSF55040">
    <property type="entry name" value="Molybdenum cofactor biosynthesis protein C, MoaC"/>
    <property type="match status" value="1"/>
</dbReference>
<organism>
    <name type="scientific">Helicobacter pylori (strain P12)</name>
    <dbReference type="NCBI Taxonomy" id="570508"/>
    <lineage>
        <taxon>Bacteria</taxon>
        <taxon>Pseudomonadati</taxon>
        <taxon>Campylobacterota</taxon>
        <taxon>Epsilonproteobacteria</taxon>
        <taxon>Campylobacterales</taxon>
        <taxon>Helicobacteraceae</taxon>
        <taxon>Helicobacter</taxon>
    </lineage>
</organism>
<reference key="1">
    <citation type="submission" date="2008-10" db="EMBL/GenBank/DDBJ databases">
        <title>The complete genome sequence of Helicobacter pylori strain P12.</title>
        <authorList>
            <person name="Fischer W."/>
            <person name="Windhager L."/>
            <person name="Karnholz A."/>
            <person name="Zeiller M."/>
            <person name="Zimmer R."/>
            <person name="Haas R."/>
        </authorList>
    </citation>
    <scope>NUCLEOTIDE SEQUENCE [LARGE SCALE GENOMIC DNA]</scope>
    <source>
        <strain>P12</strain>
    </source>
</reference>
<name>MOAC_HELP2</name>